<protein>
    <recommendedName>
        <fullName evidence="1">CTP synthase</fullName>
        <ecNumber evidence="1">6.3.4.2</ecNumber>
    </recommendedName>
    <alternativeName>
        <fullName evidence="1">Cytidine 5'-triphosphate synthase</fullName>
    </alternativeName>
    <alternativeName>
        <fullName evidence="1">Cytidine triphosphate synthetase</fullName>
        <shortName evidence="1">CTP synthetase</shortName>
        <shortName evidence="1">CTPS</shortName>
    </alternativeName>
    <alternativeName>
        <fullName evidence="1">UTP--ammonia ligase</fullName>
    </alternativeName>
</protein>
<accession>Q086B1</accession>
<name>PYRG_SHEFN</name>
<comment type="function">
    <text evidence="1">Catalyzes the ATP-dependent amination of UTP to CTP with either L-glutamine or ammonia as the source of nitrogen. Regulates intracellular CTP levels through interactions with the four ribonucleotide triphosphates.</text>
</comment>
<comment type="catalytic activity">
    <reaction evidence="1">
        <text>UTP + L-glutamine + ATP + H2O = CTP + L-glutamate + ADP + phosphate + 2 H(+)</text>
        <dbReference type="Rhea" id="RHEA:26426"/>
        <dbReference type="ChEBI" id="CHEBI:15377"/>
        <dbReference type="ChEBI" id="CHEBI:15378"/>
        <dbReference type="ChEBI" id="CHEBI:29985"/>
        <dbReference type="ChEBI" id="CHEBI:30616"/>
        <dbReference type="ChEBI" id="CHEBI:37563"/>
        <dbReference type="ChEBI" id="CHEBI:43474"/>
        <dbReference type="ChEBI" id="CHEBI:46398"/>
        <dbReference type="ChEBI" id="CHEBI:58359"/>
        <dbReference type="ChEBI" id="CHEBI:456216"/>
        <dbReference type="EC" id="6.3.4.2"/>
    </reaction>
</comment>
<comment type="catalytic activity">
    <reaction evidence="1">
        <text>L-glutamine + H2O = L-glutamate + NH4(+)</text>
        <dbReference type="Rhea" id="RHEA:15889"/>
        <dbReference type="ChEBI" id="CHEBI:15377"/>
        <dbReference type="ChEBI" id="CHEBI:28938"/>
        <dbReference type="ChEBI" id="CHEBI:29985"/>
        <dbReference type="ChEBI" id="CHEBI:58359"/>
    </reaction>
</comment>
<comment type="catalytic activity">
    <reaction evidence="1">
        <text>UTP + NH4(+) + ATP = CTP + ADP + phosphate + 2 H(+)</text>
        <dbReference type="Rhea" id="RHEA:16597"/>
        <dbReference type="ChEBI" id="CHEBI:15378"/>
        <dbReference type="ChEBI" id="CHEBI:28938"/>
        <dbReference type="ChEBI" id="CHEBI:30616"/>
        <dbReference type="ChEBI" id="CHEBI:37563"/>
        <dbReference type="ChEBI" id="CHEBI:43474"/>
        <dbReference type="ChEBI" id="CHEBI:46398"/>
        <dbReference type="ChEBI" id="CHEBI:456216"/>
    </reaction>
</comment>
<comment type="activity regulation">
    <text evidence="1">Allosterically activated by GTP, when glutamine is the substrate; GTP has no effect on the reaction when ammonia is the substrate. The allosteric effector GTP functions by stabilizing the protein conformation that binds the tetrahedral intermediate(s) formed during glutamine hydrolysis. Inhibited by the product CTP, via allosteric rather than competitive inhibition.</text>
</comment>
<comment type="pathway">
    <text evidence="1">Pyrimidine metabolism; CTP biosynthesis via de novo pathway; CTP from UDP: step 2/2.</text>
</comment>
<comment type="subunit">
    <text evidence="1">Homotetramer.</text>
</comment>
<comment type="miscellaneous">
    <text evidence="1">CTPSs have evolved a hybrid strategy for distinguishing between UTP and CTP. The overlapping regions of the product feedback inhibitory and substrate sites recognize a common feature in both compounds, the triphosphate moiety. To differentiate isosteric substrate and product pyrimidine rings, an additional pocket far from the expected kinase/ligase catalytic site, specifically recognizes the cytosine and ribose portions of the product inhibitor.</text>
</comment>
<comment type="similarity">
    <text evidence="1">Belongs to the CTP synthase family.</text>
</comment>
<feature type="chain" id="PRO_0000266213" description="CTP synthase">
    <location>
        <begin position="1"/>
        <end position="545"/>
    </location>
</feature>
<feature type="domain" description="Glutamine amidotransferase type-1" evidence="1">
    <location>
        <begin position="291"/>
        <end position="542"/>
    </location>
</feature>
<feature type="region of interest" description="Amidoligase domain" evidence="1">
    <location>
        <begin position="1"/>
        <end position="266"/>
    </location>
</feature>
<feature type="active site" description="Nucleophile; for glutamine hydrolysis" evidence="1">
    <location>
        <position position="379"/>
    </location>
</feature>
<feature type="active site" evidence="1">
    <location>
        <position position="515"/>
    </location>
</feature>
<feature type="active site" evidence="1">
    <location>
        <position position="517"/>
    </location>
</feature>
<feature type="binding site" evidence="1">
    <location>
        <position position="14"/>
    </location>
    <ligand>
        <name>CTP</name>
        <dbReference type="ChEBI" id="CHEBI:37563"/>
        <note>allosteric inhibitor</note>
    </ligand>
</feature>
<feature type="binding site" evidence="1">
    <location>
        <position position="14"/>
    </location>
    <ligand>
        <name>UTP</name>
        <dbReference type="ChEBI" id="CHEBI:46398"/>
    </ligand>
</feature>
<feature type="binding site" evidence="1">
    <location>
        <begin position="15"/>
        <end position="20"/>
    </location>
    <ligand>
        <name>ATP</name>
        <dbReference type="ChEBI" id="CHEBI:30616"/>
    </ligand>
</feature>
<feature type="binding site" evidence="1">
    <location>
        <position position="72"/>
    </location>
    <ligand>
        <name>ATP</name>
        <dbReference type="ChEBI" id="CHEBI:30616"/>
    </ligand>
</feature>
<feature type="binding site" evidence="1">
    <location>
        <position position="72"/>
    </location>
    <ligand>
        <name>Mg(2+)</name>
        <dbReference type="ChEBI" id="CHEBI:18420"/>
    </ligand>
</feature>
<feature type="binding site" evidence="1">
    <location>
        <position position="140"/>
    </location>
    <ligand>
        <name>Mg(2+)</name>
        <dbReference type="ChEBI" id="CHEBI:18420"/>
    </ligand>
</feature>
<feature type="binding site" evidence="1">
    <location>
        <begin position="147"/>
        <end position="149"/>
    </location>
    <ligand>
        <name>CTP</name>
        <dbReference type="ChEBI" id="CHEBI:37563"/>
        <note>allosteric inhibitor</note>
    </ligand>
</feature>
<feature type="binding site" evidence="1">
    <location>
        <begin position="187"/>
        <end position="192"/>
    </location>
    <ligand>
        <name>CTP</name>
        <dbReference type="ChEBI" id="CHEBI:37563"/>
        <note>allosteric inhibitor</note>
    </ligand>
</feature>
<feature type="binding site" evidence="1">
    <location>
        <begin position="187"/>
        <end position="192"/>
    </location>
    <ligand>
        <name>UTP</name>
        <dbReference type="ChEBI" id="CHEBI:46398"/>
    </ligand>
</feature>
<feature type="binding site" evidence="1">
    <location>
        <position position="223"/>
    </location>
    <ligand>
        <name>CTP</name>
        <dbReference type="ChEBI" id="CHEBI:37563"/>
        <note>allosteric inhibitor</note>
    </ligand>
</feature>
<feature type="binding site" evidence="1">
    <location>
        <position position="223"/>
    </location>
    <ligand>
        <name>UTP</name>
        <dbReference type="ChEBI" id="CHEBI:46398"/>
    </ligand>
</feature>
<feature type="binding site" evidence="1">
    <location>
        <begin position="239"/>
        <end position="241"/>
    </location>
    <ligand>
        <name>ATP</name>
        <dbReference type="ChEBI" id="CHEBI:30616"/>
    </ligand>
</feature>
<feature type="binding site" evidence="1">
    <location>
        <position position="352"/>
    </location>
    <ligand>
        <name>L-glutamine</name>
        <dbReference type="ChEBI" id="CHEBI:58359"/>
    </ligand>
</feature>
<feature type="binding site" evidence="1">
    <location>
        <begin position="380"/>
        <end position="383"/>
    </location>
    <ligand>
        <name>L-glutamine</name>
        <dbReference type="ChEBI" id="CHEBI:58359"/>
    </ligand>
</feature>
<feature type="binding site" evidence="1">
    <location>
        <position position="403"/>
    </location>
    <ligand>
        <name>L-glutamine</name>
        <dbReference type="ChEBI" id="CHEBI:58359"/>
    </ligand>
</feature>
<feature type="binding site" evidence="1">
    <location>
        <position position="470"/>
    </location>
    <ligand>
        <name>L-glutamine</name>
        <dbReference type="ChEBI" id="CHEBI:58359"/>
    </ligand>
</feature>
<reference key="1">
    <citation type="submission" date="2006-08" db="EMBL/GenBank/DDBJ databases">
        <title>Complete sequence of Shewanella frigidimarina NCIMB 400.</title>
        <authorList>
            <consortium name="US DOE Joint Genome Institute"/>
            <person name="Copeland A."/>
            <person name="Lucas S."/>
            <person name="Lapidus A."/>
            <person name="Barry K."/>
            <person name="Detter J.C."/>
            <person name="Glavina del Rio T."/>
            <person name="Hammon N."/>
            <person name="Israni S."/>
            <person name="Dalin E."/>
            <person name="Tice H."/>
            <person name="Pitluck S."/>
            <person name="Fredrickson J.K."/>
            <person name="Kolker E."/>
            <person name="McCuel L.A."/>
            <person name="DiChristina T."/>
            <person name="Nealson K.H."/>
            <person name="Newman D."/>
            <person name="Tiedje J.M."/>
            <person name="Zhou J."/>
            <person name="Romine M.F."/>
            <person name="Culley D.E."/>
            <person name="Serres M."/>
            <person name="Chertkov O."/>
            <person name="Brettin T."/>
            <person name="Bruce D."/>
            <person name="Han C."/>
            <person name="Tapia R."/>
            <person name="Gilna P."/>
            <person name="Schmutz J."/>
            <person name="Larimer F."/>
            <person name="Land M."/>
            <person name="Hauser L."/>
            <person name="Kyrpides N."/>
            <person name="Mikhailova N."/>
            <person name="Richardson P."/>
        </authorList>
    </citation>
    <scope>NUCLEOTIDE SEQUENCE [LARGE SCALE GENOMIC DNA]</scope>
    <source>
        <strain>NCIMB 400</strain>
    </source>
</reference>
<proteinExistence type="inferred from homology"/>
<organism>
    <name type="scientific">Shewanella frigidimarina (strain NCIMB 400)</name>
    <dbReference type="NCBI Taxonomy" id="318167"/>
    <lineage>
        <taxon>Bacteria</taxon>
        <taxon>Pseudomonadati</taxon>
        <taxon>Pseudomonadota</taxon>
        <taxon>Gammaproteobacteria</taxon>
        <taxon>Alteromonadales</taxon>
        <taxon>Shewanellaceae</taxon>
        <taxon>Shewanella</taxon>
    </lineage>
</organism>
<evidence type="ECO:0000255" key="1">
    <source>
        <dbReference type="HAMAP-Rule" id="MF_01227"/>
    </source>
</evidence>
<keyword id="KW-0067">ATP-binding</keyword>
<keyword id="KW-0315">Glutamine amidotransferase</keyword>
<keyword id="KW-0436">Ligase</keyword>
<keyword id="KW-0460">Magnesium</keyword>
<keyword id="KW-0479">Metal-binding</keyword>
<keyword id="KW-0547">Nucleotide-binding</keyword>
<keyword id="KW-0665">Pyrimidine biosynthesis</keyword>
<keyword id="KW-1185">Reference proteome</keyword>
<gene>
    <name evidence="1" type="primary">pyrG</name>
    <name type="ordered locus">Sfri_1051</name>
</gene>
<dbReference type="EC" id="6.3.4.2" evidence="1"/>
<dbReference type="EMBL" id="CP000447">
    <property type="protein sequence ID" value="ABI70904.1"/>
    <property type="molecule type" value="Genomic_DNA"/>
</dbReference>
<dbReference type="RefSeq" id="WP_011636525.1">
    <property type="nucleotide sequence ID" value="NC_008345.1"/>
</dbReference>
<dbReference type="SMR" id="Q086B1"/>
<dbReference type="STRING" id="318167.Sfri_1051"/>
<dbReference type="MEROPS" id="C26.964"/>
<dbReference type="KEGG" id="sfr:Sfri_1051"/>
<dbReference type="eggNOG" id="COG0504">
    <property type="taxonomic scope" value="Bacteria"/>
</dbReference>
<dbReference type="HOGENOM" id="CLU_011675_5_0_6"/>
<dbReference type="OrthoDB" id="9801107at2"/>
<dbReference type="UniPathway" id="UPA00159">
    <property type="reaction ID" value="UER00277"/>
</dbReference>
<dbReference type="Proteomes" id="UP000000684">
    <property type="component" value="Chromosome"/>
</dbReference>
<dbReference type="GO" id="GO:0005829">
    <property type="term" value="C:cytosol"/>
    <property type="evidence" value="ECO:0007669"/>
    <property type="project" value="TreeGrafter"/>
</dbReference>
<dbReference type="GO" id="GO:0005524">
    <property type="term" value="F:ATP binding"/>
    <property type="evidence" value="ECO:0007669"/>
    <property type="project" value="UniProtKB-KW"/>
</dbReference>
<dbReference type="GO" id="GO:0003883">
    <property type="term" value="F:CTP synthase activity"/>
    <property type="evidence" value="ECO:0007669"/>
    <property type="project" value="UniProtKB-UniRule"/>
</dbReference>
<dbReference type="GO" id="GO:0004359">
    <property type="term" value="F:glutaminase activity"/>
    <property type="evidence" value="ECO:0007669"/>
    <property type="project" value="RHEA"/>
</dbReference>
<dbReference type="GO" id="GO:0042802">
    <property type="term" value="F:identical protein binding"/>
    <property type="evidence" value="ECO:0007669"/>
    <property type="project" value="TreeGrafter"/>
</dbReference>
<dbReference type="GO" id="GO:0046872">
    <property type="term" value="F:metal ion binding"/>
    <property type="evidence" value="ECO:0007669"/>
    <property type="project" value="UniProtKB-KW"/>
</dbReference>
<dbReference type="GO" id="GO:0044210">
    <property type="term" value="P:'de novo' CTP biosynthetic process"/>
    <property type="evidence" value="ECO:0007669"/>
    <property type="project" value="UniProtKB-UniRule"/>
</dbReference>
<dbReference type="GO" id="GO:0019856">
    <property type="term" value="P:pyrimidine nucleobase biosynthetic process"/>
    <property type="evidence" value="ECO:0007669"/>
    <property type="project" value="TreeGrafter"/>
</dbReference>
<dbReference type="CDD" id="cd03113">
    <property type="entry name" value="CTPS_N"/>
    <property type="match status" value="1"/>
</dbReference>
<dbReference type="CDD" id="cd01746">
    <property type="entry name" value="GATase1_CTP_Synthase"/>
    <property type="match status" value="1"/>
</dbReference>
<dbReference type="FunFam" id="3.40.50.300:FF:000009">
    <property type="entry name" value="CTP synthase"/>
    <property type="match status" value="1"/>
</dbReference>
<dbReference type="FunFam" id="3.40.50.880:FF:000002">
    <property type="entry name" value="CTP synthase"/>
    <property type="match status" value="1"/>
</dbReference>
<dbReference type="Gene3D" id="3.40.50.880">
    <property type="match status" value="1"/>
</dbReference>
<dbReference type="Gene3D" id="3.40.50.300">
    <property type="entry name" value="P-loop containing nucleotide triphosphate hydrolases"/>
    <property type="match status" value="1"/>
</dbReference>
<dbReference type="HAMAP" id="MF_01227">
    <property type="entry name" value="PyrG"/>
    <property type="match status" value="1"/>
</dbReference>
<dbReference type="InterPro" id="IPR029062">
    <property type="entry name" value="Class_I_gatase-like"/>
</dbReference>
<dbReference type="InterPro" id="IPR004468">
    <property type="entry name" value="CTP_synthase"/>
</dbReference>
<dbReference type="InterPro" id="IPR017456">
    <property type="entry name" value="CTP_synthase_N"/>
</dbReference>
<dbReference type="InterPro" id="IPR017926">
    <property type="entry name" value="GATASE"/>
</dbReference>
<dbReference type="InterPro" id="IPR033828">
    <property type="entry name" value="GATase1_CTP_Synthase"/>
</dbReference>
<dbReference type="InterPro" id="IPR027417">
    <property type="entry name" value="P-loop_NTPase"/>
</dbReference>
<dbReference type="NCBIfam" id="NF003792">
    <property type="entry name" value="PRK05380.1"/>
    <property type="match status" value="1"/>
</dbReference>
<dbReference type="NCBIfam" id="TIGR00337">
    <property type="entry name" value="PyrG"/>
    <property type="match status" value="1"/>
</dbReference>
<dbReference type="PANTHER" id="PTHR11550">
    <property type="entry name" value="CTP SYNTHASE"/>
    <property type="match status" value="1"/>
</dbReference>
<dbReference type="PANTHER" id="PTHR11550:SF0">
    <property type="entry name" value="CTP SYNTHASE-RELATED"/>
    <property type="match status" value="1"/>
</dbReference>
<dbReference type="Pfam" id="PF06418">
    <property type="entry name" value="CTP_synth_N"/>
    <property type="match status" value="1"/>
</dbReference>
<dbReference type="Pfam" id="PF00117">
    <property type="entry name" value="GATase"/>
    <property type="match status" value="1"/>
</dbReference>
<dbReference type="SUPFAM" id="SSF52317">
    <property type="entry name" value="Class I glutamine amidotransferase-like"/>
    <property type="match status" value="1"/>
</dbReference>
<dbReference type="SUPFAM" id="SSF52540">
    <property type="entry name" value="P-loop containing nucleoside triphosphate hydrolases"/>
    <property type="match status" value="1"/>
</dbReference>
<dbReference type="PROSITE" id="PS51273">
    <property type="entry name" value="GATASE_TYPE_1"/>
    <property type="match status" value="1"/>
</dbReference>
<sequence>MTTRYIFVTGGVVSSLGKGIAAASLAAILEARGLNVTIMKLDPYINVDPGTMSPTQHGEVFVTEDGAETDLDLGHYERFIRTKMNRRNNFTTGRIYEEVISKERRGDYLGATIQVIPHITNAIKEKVLAGGEGHDVAIVEIGGTVGDIESLPFLESIRQLGSELGRERTLFMHLTLVPFLGAAGEIKTKPTQHSVKELRSIGIAPDVLVCRGDRAIPANEKAKISLFCNVEERAVISLKDVDSIYKIPALLRSQGLDDLVIKRFNLTCNEADLSEWENVIYQEANPNGEVTIGMVGKYIELPDAYKSVNEALKHAGLKNRVTVNIKYIDSQTVEAKGEEVLQGLDGILVPGGFGERGVEGKIFAAKFARENNLPYFGICLGMQVALIEFARHVAGLEGAHSTEFNPQTPYPVVGLITEWINEEGDVETRHESSDLGGTMRLGAQLCHLKEGTKAAVAYDSATCVERHRHRYEVNNNYIDRLEKAGLVFSGLSSDRKLIEMIELPNHPWFVASQFHPEFTSTPRDGHALFEGFIAASYAYQKRDID</sequence>